<accession>A4XTE5</accession>
<gene>
    <name evidence="1" type="primary">mtnA</name>
    <name type="ordered locus">Pmen_1847</name>
</gene>
<protein>
    <recommendedName>
        <fullName evidence="1">Methylthioribose-1-phosphate isomerase</fullName>
        <shortName evidence="1">M1Pi</shortName>
        <shortName evidence="1">MTR-1-P isomerase</shortName>
        <ecNumber evidence="1">5.3.1.23</ecNumber>
    </recommendedName>
    <alternativeName>
        <fullName evidence="1">S-methyl-5-thioribose-1-phosphate isomerase</fullName>
    </alternativeName>
</protein>
<comment type="function">
    <text evidence="1">Catalyzes the interconversion of methylthioribose-1-phosphate (MTR-1-P) into methylthioribulose-1-phosphate (MTRu-1-P).</text>
</comment>
<comment type="catalytic activity">
    <reaction evidence="1">
        <text>5-(methylsulfanyl)-alpha-D-ribose 1-phosphate = 5-(methylsulfanyl)-D-ribulose 1-phosphate</text>
        <dbReference type="Rhea" id="RHEA:19989"/>
        <dbReference type="ChEBI" id="CHEBI:58533"/>
        <dbReference type="ChEBI" id="CHEBI:58548"/>
        <dbReference type="EC" id="5.3.1.23"/>
    </reaction>
</comment>
<comment type="pathway">
    <text evidence="1">Amino-acid biosynthesis; L-methionine biosynthesis via salvage pathway; L-methionine from S-methyl-5-thio-alpha-D-ribose 1-phosphate: step 1/6.</text>
</comment>
<comment type="similarity">
    <text evidence="2">Belongs to the eIF-2B alpha/beta/delta subunits family. MtnA subfamily.</text>
</comment>
<reference key="1">
    <citation type="submission" date="2007-04" db="EMBL/GenBank/DDBJ databases">
        <title>Complete sequence of Pseudomonas mendocina ymp.</title>
        <authorList>
            <consortium name="US DOE Joint Genome Institute"/>
            <person name="Copeland A."/>
            <person name="Lucas S."/>
            <person name="Lapidus A."/>
            <person name="Barry K."/>
            <person name="Glavina del Rio T."/>
            <person name="Dalin E."/>
            <person name="Tice H."/>
            <person name="Pitluck S."/>
            <person name="Kiss H."/>
            <person name="Brettin T."/>
            <person name="Detter J.C."/>
            <person name="Bruce D."/>
            <person name="Han C."/>
            <person name="Schmutz J."/>
            <person name="Larimer F."/>
            <person name="Land M."/>
            <person name="Hauser L."/>
            <person name="Kyrpides N."/>
            <person name="Mikhailova N."/>
            <person name="Hersman L."/>
            <person name="Dubois J."/>
            <person name="Maurice P."/>
            <person name="Richardson P."/>
        </authorList>
    </citation>
    <scope>NUCLEOTIDE SEQUENCE [LARGE SCALE GENOMIC DNA]</scope>
    <source>
        <strain>ymp</strain>
    </source>
</reference>
<organism>
    <name type="scientific">Ectopseudomonas mendocina (strain ymp)</name>
    <name type="common">Pseudomonas mendocina</name>
    <dbReference type="NCBI Taxonomy" id="399739"/>
    <lineage>
        <taxon>Bacteria</taxon>
        <taxon>Pseudomonadati</taxon>
        <taxon>Pseudomonadota</taxon>
        <taxon>Gammaproteobacteria</taxon>
        <taxon>Pseudomonadales</taxon>
        <taxon>Pseudomonadaceae</taxon>
        <taxon>Ectopseudomonas</taxon>
    </lineage>
</organism>
<evidence type="ECO:0000255" key="1">
    <source>
        <dbReference type="HAMAP-Rule" id="MF_01678"/>
    </source>
</evidence>
<evidence type="ECO:0000305" key="2"/>
<feature type="chain" id="PRO_0000357225" description="Methylthioribose-1-phosphate isomerase">
    <location>
        <begin position="1"/>
        <end position="358"/>
    </location>
</feature>
<feature type="active site" description="Proton donor" evidence="1">
    <location>
        <position position="246"/>
    </location>
</feature>
<feature type="binding site" evidence="1">
    <location>
        <begin position="54"/>
        <end position="56"/>
    </location>
    <ligand>
        <name>substrate</name>
    </ligand>
</feature>
<feature type="binding site" evidence="1">
    <location>
        <position position="96"/>
    </location>
    <ligand>
        <name>substrate</name>
    </ligand>
</feature>
<feature type="binding site" evidence="1">
    <location>
        <position position="205"/>
    </location>
    <ligand>
        <name>substrate</name>
    </ligand>
</feature>
<feature type="binding site" evidence="1">
    <location>
        <begin position="256"/>
        <end position="257"/>
    </location>
    <ligand>
        <name>substrate</name>
    </ligand>
</feature>
<feature type="site" description="Transition state stabilizer" evidence="1">
    <location>
        <position position="166"/>
    </location>
</feature>
<proteinExistence type="inferred from homology"/>
<sequence length="358" mass="38998">MREQLLAVERVQAIEWRDGALYLLDQRLLPHRQTWLRFDHAAEVADAIRDMVVRGAPAIGIAAAYGLVLGARARLQAGGDWREALEADFARLEQSRPTAVNLFWALQRMRERLARLKDDGEVLGQLEAEAVGIHASDREANLTMAQLGMELIRKHQGNPQVVLTHCNAGALATGGFGTALGVIRAAHLEGLLEHVYVDETRPWLQGARLTAWELAGDGVPVSLNVDAAAAHLMKTKGITWVIVGADRITANGDVANKIGTYQLAVNAMHHGMRFMVVAPSSTIDMSLESGDDILLEERSGSELLEVAGQPVAADVPAVNPVFDVTPADLVDYIVTEKGVIERPDSTKLAQLMCRKRLH</sequence>
<dbReference type="EC" id="5.3.1.23" evidence="1"/>
<dbReference type="EMBL" id="CP000680">
    <property type="protein sequence ID" value="ABP84611.1"/>
    <property type="molecule type" value="Genomic_DNA"/>
</dbReference>
<dbReference type="SMR" id="A4XTE5"/>
<dbReference type="STRING" id="399739.Pmen_1847"/>
<dbReference type="KEGG" id="pmy:Pmen_1847"/>
<dbReference type="PATRIC" id="fig|399739.8.peg.1877"/>
<dbReference type="eggNOG" id="COG0182">
    <property type="taxonomic scope" value="Bacteria"/>
</dbReference>
<dbReference type="HOGENOM" id="CLU_016218_1_2_6"/>
<dbReference type="OrthoDB" id="9803436at2"/>
<dbReference type="UniPathway" id="UPA00904">
    <property type="reaction ID" value="UER00874"/>
</dbReference>
<dbReference type="GO" id="GO:0046523">
    <property type="term" value="F:S-methyl-5-thioribose-1-phosphate isomerase activity"/>
    <property type="evidence" value="ECO:0007669"/>
    <property type="project" value="UniProtKB-UniRule"/>
</dbReference>
<dbReference type="GO" id="GO:0019509">
    <property type="term" value="P:L-methionine salvage from methylthioadenosine"/>
    <property type="evidence" value="ECO:0007669"/>
    <property type="project" value="UniProtKB-UniRule"/>
</dbReference>
<dbReference type="FunFam" id="1.20.120.420:FF:000008">
    <property type="entry name" value="Methylthioribose-1-phosphate isomerase"/>
    <property type="match status" value="1"/>
</dbReference>
<dbReference type="FunFam" id="3.40.50.10470:FF:000006">
    <property type="entry name" value="Methylthioribose-1-phosphate isomerase"/>
    <property type="match status" value="1"/>
</dbReference>
<dbReference type="Gene3D" id="1.20.120.420">
    <property type="entry name" value="translation initiation factor eif-2b, domain 1"/>
    <property type="match status" value="1"/>
</dbReference>
<dbReference type="Gene3D" id="3.40.50.10470">
    <property type="entry name" value="Translation initiation factor eif-2b, domain 2"/>
    <property type="match status" value="1"/>
</dbReference>
<dbReference type="HAMAP" id="MF_01678">
    <property type="entry name" value="Salvage_MtnA"/>
    <property type="match status" value="1"/>
</dbReference>
<dbReference type="InterPro" id="IPR000649">
    <property type="entry name" value="IF-2B-related"/>
</dbReference>
<dbReference type="InterPro" id="IPR005251">
    <property type="entry name" value="IF-M1Pi"/>
</dbReference>
<dbReference type="InterPro" id="IPR042529">
    <property type="entry name" value="IF_2B-like_C"/>
</dbReference>
<dbReference type="InterPro" id="IPR011559">
    <property type="entry name" value="Initiation_fac_2B_a/b/d"/>
</dbReference>
<dbReference type="InterPro" id="IPR027363">
    <property type="entry name" value="M1Pi_N"/>
</dbReference>
<dbReference type="InterPro" id="IPR037171">
    <property type="entry name" value="NagB/RpiA_transferase-like"/>
</dbReference>
<dbReference type="NCBIfam" id="TIGR00524">
    <property type="entry name" value="eIF-2B_rel"/>
    <property type="match status" value="1"/>
</dbReference>
<dbReference type="NCBIfam" id="NF004326">
    <property type="entry name" value="PRK05720.1"/>
    <property type="match status" value="1"/>
</dbReference>
<dbReference type="NCBIfam" id="TIGR00512">
    <property type="entry name" value="salvage_mtnA"/>
    <property type="match status" value="1"/>
</dbReference>
<dbReference type="PANTHER" id="PTHR43475">
    <property type="entry name" value="METHYLTHIORIBOSE-1-PHOSPHATE ISOMERASE"/>
    <property type="match status" value="1"/>
</dbReference>
<dbReference type="PANTHER" id="PTHR43475:SF1">
    <property type="entry name" value="METHYLTHIORIBOSE-1-PHOSPHATE ISOMERASE"/>
    <property type="match status" value="1"/>
</dbReference>
<dbReference type="Pfam" id="PF01008">
    <property type="entry name" value="IF-2B"/>
    <property type="match status" value="1"/>
</dbReference>
<dbReference type="SUPFAM" id="SSF100950">
    <property type="entry name" value="NagB/RpiA/CoA transferase-like"/>
    <property type="match status" value="1"/>
</dbReference>
<name>MTNA_ECTM1</name>
<keyword id="KW-0028">Amino-acid biosynthesis</keyword>
<keyword id="KW-0413">Isomerase</keyword>
<keyword id="KW-0486">Methionine biosynthesis</keyword>